<proteinExistence type="evidence at protein level"/>
<name>MAST1_RAT</name>
<organism>
    <name type="scientific">Rattus norvegicus</name>
    <name type="common">Rat</name>
    <dbReference type="NCBI Taxonomy" id="10116"/>
    <lineage>
        <taxon>Eukaryota</taxon>
        <taxon>Metazoa</taxon>
        <taxon>Chordata</taxon>
        <taxon>Craniata</taxon>
        <taxon>Vertebrata</taxon>
        <taxon>Euteleostomi</taxon>
        <taxon>Mammalia</taxon>
        <taxon>Eutheria</taxon>
        <taxon>Euarchontoglires</taxon>
        <taxon>Glires</taxon>
        <taxon>Rodentia</taxon>
        <taxon>Myomorpha</taxon>
        <taxon>Muroidea</taxon>
        <taxon>Muridae</taxon>
        <taxon>Murinae</taxon>
        <taxon>Rattus</taxon>
    </lineage>
</organism>
<feature type="chain" id="PRO_0000086311" description="Microtubule-associated serine/threonine-protein kinase 1">
    <location>
        <begin position="1"/>
        <end position="1570"/>
    </location>
</feature>
<feature type="domain" description="Protein kinase" evidence="4">
    <location>
        <begin position="376"/>
        <end position="649"/>
    </location>
</feature>
<feature type="domain" description="AGC-kinase C-terminal" evidence="5">
    <location>
        <begin position="650"/>
        <end position="721"/>
    </location>
</feature>
<feature type="domain" description="PDZ" evidence="3">
    <location>
        <begin position="969"/>
        <end position="1057"/>
    </location>
</feature>
<feature type="region of interest" description="Disordered" evidence="7">
    <location>
        <begin position="23"/>
        <end position="80"/>
    </location>
</feature>
<feature type="region of interest" description="Disordered" evidence="7">
    <location>
        <begin position="94"/>
        <end position="117"/>
    </location>
</feature>
<feature type="region of interest" description="Disordered" evidence="7">
    <location>
        <begin position="139"/>
        <end position="171"/>
    </location>
</feature>
<feature type="region of interest" description="Disordered" evidence="7">
    <location>
        <begin position="341"/>
        <end position="377"/>
    </location>
</feature>
<feature type="region of interest" description="Disordered" evidence="7">
    <location>
        <begin position="717"/>
        <end position="911"/>
    </location>
</feature>
<feature type="region of interest" description="Disordered" evidence="7">
    <location>
        <begin position="931"/>
        <end position="967"/>
    </location>
</feature>
<feature type="region of interest" description="Disordered" evidence="7">
    <location>
        <begin position="1061"/>
        <end position="1186"/>
    </location>
</feature>
<feature type="region of interest" description="Disordered" evidence="7">
    <location>
        <begin position="1202"/>
        <end position="1294"/>
    </location>
</feature>
<feature type="region of interest" description="Disordered" evidence="7">
    <location>
        <begin position="1307"/>
        <end position="1570"/>
    </location>
</feature>
<feature type="compositionally biased region" description="Polar residues" evidence="7">
    <location>
        <begin position="29"/>
        <end position="45"/>
    </location>
</feature>
<feature type="compositionally biased region" description="Polar residues" evidence="7">
    <location>
        <begin position="66"/>
        <end position="80"/>
    </location>
</feature>
<feature type="compositionally biased region" description="Polar residues" evidence="7">
    <location>
        <begin position="94"/>
        <end position="104"/>
    </location>
</feature>
<feature type="compositionally biased region" description="Low complexity" evidence="7">
    <location>
        <begin position="105"/>
        <end position="114"/>
    </location>
</feature>
<feature type="compositionally biased region" description="Low complexity" evidence="7">
    <location>
        <begin position="151"/>
        <end position="170"/>
    </location>
</feature>
<feature type="compositionally biased region" description="Basic and acidic residues" evidence="7">
    <location>
        <begin position="738"/>
        <end position="779"/>
    </location>
</feature>
<feature type="compositionally biased region" description="Low complexity" evidence="7">
    <location>
        <begin position="933"/>
        <end position="961"/>
    </location>
</feature>
<feature type="compositionally biased region" description="Basic residues" evidence="7">
    <location>
        <begin position="1069"/>
        <end position="1082"/>
    </location>
</feature>
<feature type="compositionally biased region" description="Basic and acidic residues" evidence="7">
    <location>
        <begin position="1083"/>
        <end position="1092"/>
    </location>
</feature>
<feature type="compositionally biased region" description="Low complexity" evidence="7">
    <location>
        <begin position="1104"/>
        <end position="1132"/>
    </location>
</feature>
<feature type="compositionally biased region" description="Polar residues" evidence="7">
    <location>
        <begin position="1139"/>
        <end position="1148"/>
    </location>
</feature>
<feature type="compositionally biased region" description="Low complexity" evidence="7">
    <location>
        <begin position="1149"/>
        <end position="1174"/>
    </location>
</feature>
<feature type="compositionally biased region" description="Polar residues" evidence="7">
    <location>
        <begin position="1228"/>
        <end position="1237"/>
    </location>
</feature>
<feature type="compositionally biased region" description="Basic and acidic residues" evidence="7">
    <location>
        <begin position="1278"/>
        <end position="1294"/>
    </location>
</feature>
<feature type="active site" description="Proton acceptor" evidence="1 4 6">
    <location>
        <position position="499"/>
    </location>
</feature>
<feature type="binding site" evidence="1 4">
    <location>
        <begin position="382"/>
        <end position="390"/>
    </location>
    <ligand>
        <name>ATP</name>
        <dbReference type="ChEBI" id="CHEBI:30616"/>
    </ligand>
</feature>
<feature type="binding site" evidence="1 4">
    <location>
        <position position="405"/>
    </location>
    <ligand>
        <name>ATP</name>
        <dbReference type="ChEBI" id="CHEBI:30616"/>
    </ligand>
</feature>
<feature type="modified residue" description="Phosphoserine" evidence="2">
    <location>
        <position position="90"/>
    </location>
</feature>
<feature type="modified residue" description="Phosphoserine" evidence="13">
    <location>
        <position position="139"/>
    </location>
</feature>
<feature type="modified residue" description="Phosphoserine" evidence="2">
    <location>
        <position position="167"/>
    </location>
</feature>
<feature type="modified residue" description="Phosphoserine" evidence="13">
    <location>
        <position position="346"/>
    </location>
</feature>
<feature type="modified residue" description="Phosphothreonine" evidence="13">
    <location>
        <position position="351"/>
    </location>
</feature>
<feature type="modified residue" description="Phosphoserine" evidence="13">
    <location>
        <position position="689"/>
    </location>
</feature>
<feature type="modified residue" description="Phosphoserine" evidence="2">
    <location>
        <position position="895"/>
    </location>
</feature>
<feature type="modified residue" description="Phosphoserine" evidence="13">
    <location>
        <position position="954"/>
    </location>
</feature>
<feature type="modified residue" description="Phosphoserine" evidence="13">
    <location>
        <position position="1414"/>
    </location>
</feature>
<feature type="splice variant" id="VSP_051684" description="In isoform 2." evidence="9">
    <original>SKKRSSLFRKITKQSNLLHTSRSLSSLN</original>
    <variation>RGHEFKSQQPHGGSQPSVTRSNTLFWCV</variation>
    <location>
        <begin position="1090"/>
        <end position="1117"/>
    </location>
</feature>
<evidence type="ECO:0000250" key="1">
    <source>
        <dbReference type="UniProtKB" id="Q9BXM7"/>
    </source>
</evidence>
<evidence type="ECO:0000250" key="2">
    <source>
        <dbReference type="UniProtKB" id="Q9R1L5"/>
    </source>
</evidence>
<evidence type="ECO:0000255" key="3">
    <source>
        <dbReference type="PROSITE-ProRule" id="PRU00143"/>
    </source>
</evidence>
<evidence type="ECO:0000255" key="4">
    <source>
        <dbReference type="PROSITE-ProRule" id="PRU00159"/>
    </source>
</evidence>
<evidence type="ECO:0000255" key="5">
    <source>
        <dbReference type="PROSITE-ProRule" id="PRU00618"/>
    </source>
</evidence>
<evidence type="ECO:0000255" key="6">
    <source>
        <dbReference type="PROSITE-ProRule" id="PRU10027"/>
    </source>
</evidence>
<evidence type="ECO:0000256" key="7">
    <source>
        <dbReference type="SAM" id="MobiDB-lite"/>
    </source>
</evidence>
<evidence type="ECO:0000269" key="8">
    <source>
    </source>
</evidence>
<evidence type="ECO:0000303" key="9">
    <source>
    </source>
</evidence>
<evidence type="ECO:0000305" key="10"/>
<evidence type="ECO:0000312" key="11">
    <source>
        <dbReference type="EMBL" id="AAO72536.1"/>
    </source>
</evidence>
<evidence type="ECO:0000312" key="12">
    <source>
        <dbReference type="RGD" id="631372"/>
    </source>
</evidence>
<evidence type="ECO:0007744" key="13">
    <source>
    </source>
</evidence>
<accession>Q810W7</accession>
<accession>Q810W8</accession>
<comment type="function">
    <text evidence="2 8 9">Microtubule-associated protein essential for correct brain development (By similarity). Appears to link the dystrophin/utrophin network with microtubule filaments via the syntrophins. Phosphorylation of DMD or UTRN may modulate their affinities for associated proteins. Isoform 2 may play a role in neuronal transcriptional regulation.</text>
</comment>
<comment type="catalytic activity">
    <reaction evidence="1">
        <text>L-seryl-[protein] + ATP = O-phospho-L-seryl-[protein] + ADP + H(+)</text>
        <dbReference type="Rhea" id="RHEA:17989"/>
        <dbReference type="Rhea" id="RHEA-COMP:9863"/>
        <dbReference type="Rhea" id="RHEA-COMP:11604"/>
        <dbReference type="ChEBI" id="CHEBI:15378"/>
        <dbReference type="ChEBI" id="CHEBI:29999"/>
        <dbReference type="ChEBI" id="CHEBI:30616"/>
        <dbReference type="ChEBI" id="CHEBI:83421"/>
        <dbReference type="ChEBI" id="CHEBI:456216"/>
        <dbReference type="EC" id="2.7.11.1"/>
    </reaction>
</comment>
<comment type="catalytic activity">
    <reaction evidence="1">
        <text>L-threonyl-[protein] + ATP = O-phospho-L-threonyl-[protein] + ADP + H(+)</text>
        <dbReference type="Rhea" id="RHEA:46608"/>
        <dbReference type="Rhea" id="RHEA-COMP:11060"/>
        <dbReference type="Rhea" id="RHEA-COMP:11605"/>
        <dbReference type="ChEBI" id="CHEBI:15378"/>
        <dbReference type="ChEBI" id="CHEBI:30013"/>
        <dbReference type="ChEBI" id="CHEBI:30616"/>
        <dbReference type="ChEBI" id="CHEBI:61977"/>
        <dbReference type="ChEBI" id="CHEBI:456216"/>
        <dbReference type="EC" id="2.7.11.1"/>
    </reaction>
</comment>
<comment type="cofactor">
    <cofactor evidence="1">
        <name>Mg(2+)</name>
        <dbReference type="ChEBI" id="CHEBI:18420"/>
    </cofactor>
</comment>
<comment type="subunit">
    <text evidence="2">Interacts with the microtubules. Part of a low affinity complex that associates with, but is distinct from, the postsynaptic density. Interacts with SNTB2.</text>
</comment>
<comment type="subcellular location">
    <molecule>Isoform 1</molecule>
    <subcellularLocation>
        <location evidence="2">Cell membrane</location>
        <topology evidence="2">Peripheral membrane protein</topology>
        <orientation evidence="2">Cytoplasmic side</orientation>
    </subcellularLocation>
    <subcellularLocation>
        <location evidence="2">Cytoplasm</location>
        <location evidence="2">Cytoskeleton</location>
    </subcellularLocation>
    <subcellularLocation>
        <location evidence="2">Cell projection</location>
        <location evidence="2">Axon</location>
    </subcellularLocation>
    <subcellularLocation>
        <location evidence="2">Cell projection</location>
        <location evidence="2">Dendrite</location>
    </subcellularLocation>
    <text evidence="2">Also localized in the soma of neurons. Observed as punctate clusters in the processes of interneurons and along the cell body periphery. Colocalizes with syntrophins at the cell membrane.</text>
</comment>
<comment type="subcellular location">
    <molecule>Isoform 2</molecule>
    <subcellularLocation>
        <location>Nucleus</location>
    </subcellularLocation>
</comment>
<comment type="alternative products">
    <event type="alternative splicing"/>
    <isoform>
        <id>Q810W7-1</id>
        <name evidence="8">1</name>
        <name evidence="9">Sast170</name>
        <sequence type="displayed"/>
    </isoform>
    <isoform>
        <id>Q810W7-2</id>
        <name evidence="8">2</name>
        <name evidence="9">Sast124</name>
        <sequence type="described" ref="VSP_051684"/>
    </isoform>
</comment>
<comment type="tissue specificity">
    <text evidence="8">Both isoform 1 and isoform 2 appear to be restricted to the brain. Isoform 2 is strongly expressed in the neurons of the subventricular zone and granule cells of the olfactory bulb, Islands of Calleja, hippocampal dentate gyrus and cerebellum.</text>
</comment>
<comment type="similarity">
    <text evidence="10">Belongs to the protein kinase superfamily. AGC Ser/Thr protein kinase family.</text>
</comment>
<reference evidence="10 11" key="1">
    <citation type="journal article" date="2003" name="Neuroscience">
        <title>Sast124, a novel splice variant of syntrophin-associated serine/threonine kinase (SAST), is specifically localized in the restricted brain regions.</title>
        <authorList>
            <person name="Yano R."/>
            <person name="Yap C.C."/>
            <person name="Yamazaki Y."/>
            <person name="Muto Y."/>
            <person name="Kishida H."/>
            <person name="Okada D."/>
            <person name="Hashikawa T."/>
        </authorList>
    </citation>
    <scope>NUCLEOTIDE SEQUENCE [MRNA] (ISOFORMS 1 AND 2)</scope>
    <scope>FUNCTION</scope>
    <scope>SUBCELLULAR LOCATION</scope>
    <scope>TISSUE SPECIFICITY</scope>
    <source>
        <strain evidence="11">Wistar</strain>
    </source>
</reference>
<reference key="2">
    <citation type="journal article" date="2012" name="Nat. Commun.">
        <title>Quantitative maps of protein phosphorylation sites across 14 different rat organs and tissues.</title>
        <authorList>
            <person name="Lundby A."/>
            <person name="Secher A."/>
            <person name="Lage K."/>
            <person name="Nordsborg N.B."/>
            <person name="Dmytriyev A."/>
            <person name="Lundby C."/>
            <person name="Olsen J.V."/>
        </authorList>
    </citation>
    <scope>PHOSPHORYLATION [LARGE SCALE ANALYSIS] AT SER-139; SER-346; THR-351; SER-689; SER-954 AND SER-1414</scope>
    <scope>IDENTIFICATION BY MASS SPECTROMETRY [LARGE SCALE ANALYSIS]</scope>
</reference>
<dbReference type="EC" id="2.7.11.1"/>
<dbReference type="EMBL" id="AY227206">
    <property type="protein sequence ID" value="AAO72535.1"/>
    <property type="molecule type" value="mRNA"/>
</dbReference>
<dbReference type="EMBL" id="AY227207">
    <property type="protein sequence ID" value="AAO72536.1"/>
    <property type="molecule type" value="mRNA"/>
</dbReference>
<dbReference type="RefSeq" id="NP_851603.1">
    <molecule id="Q810W7-1"/>
    <property type="nucleotide sequence ID" value="NM_181089.2"/>
</dbReference>
<dbReference type="SMR" id="Q810W7"/>
<dbReference type="BioGRID" id="261861">
    <property type="interactions" value="1"/>
</dbReference>
<dbReference type="FunCoup" id="Q810W7">
    <property type="interactions" value="1362"/>
</dbReference>
<dbReference type="IntAct" id="Q810W7">
    <property type="interactions" value="1"/>
</dbReference>
<dbReference type="STRING" id="10116.ENSRNOP00000004646"/>
<dbReference type="GlyGen" id="Q810W7">
    <property type="glycosylation" value="2 sites"/>
</dbReference>
<dbReference type="iPTMnet" id="Q810W7"/>
<dbReference type="PhosphoSitePlus" id="Q810W7"/>
<dbReference type="jPOST" id="Q810W7"/>
<dbReference type="PaxDb" id="10116-ENSRNOP00000004646"/>
<dbReference type="Ensembl" id="ENSRNOT00000004646.4">
    <molecule id="Q810W7-1"/>
    <property type="protein sequence ID" value="ENSRNOP00000004646.2"/>
    <property type="gene ID" value="ENSRNOG00000003469.8"/>
</dbReference>
<dbReference type="GeneID" id="353118"/>
<dbReference type="KEGG" id="rno:353118"/>
<dbReference type="AGR" id="RGD:631372"/>
<dbReference type="CTD" id="22983"/>
<dbReference type="RGD" id="631372">
    <property type="gene designation" value="MAST1"/>
</dbReference>
<dbReference type="eggNOG" id="KOG0605">
    <property type="taxonomic scope" value="Eukaryota"/>
</dbReference>
<dbReference type="eggNOG" id="KOG0606">
    <property type="taxonomic scope" value="Eukaryota"/>
</dbReference>
<dbReference type="GeneTree" id="ENSGT00940000157700"/>
<dbReference type="HOGENOM" id="CLU_000288_9_0_1"/>
<dbReference type="InParanoid" id="Q810W7"/>
<dbReference type="OrthoDB" id="10070999at2759"/>
<dbReference type="PhylomeDB" id="Q810W7"/>
<dbReference type="TreeFam" id="TF313149"/>
<dbReference type="PRO" id="PR:Q810W7"/>
<dbReference type="Proteomes" id="UP000002494">
    <property type="component" value="Chromosome 19"/>
</dbReference>
<dbReference type="Bgee" id="ENSRNOG00000003469">
    <property type="expression patterns" value="Expressed in cerebellum and 3 other cell types or tissues"/>
</dbReference>
<dbReference type="GO" id="GO:0030424">
    <property type="term" value="C:axon"/>
    <property type="evidence" value="ECO:0007669"/>
    <property type="project" value="UniProtKB-SubCell"/>
</dbReference>
<dbReference type="GO" id="GO:0005737">
    <property type="term" value="C:cytoplasm"/>
    <property type="evidence" value="ECO:0007669"/>
    <property type="project" value="UniProtKB-KW"/>
</dbReference>
<dbReference type="GO" id="GO:0005856">
    <property type="term" value="C:cytoskeleton"/>
    <property type="evidence" value="ECO:0007669"/>
    <property type="project" value="UniProtKB-SubCell"/>
</dbReference>
<dbReference type="GO" id="GO:0030425">
    <property type="term" value="C:dendrite"/>
    <property type="evidence" value="ECO:0007669"/>
    <property type="project" value="UniProtKB-SubCell"/>
</dbReference>
<dbReference type="GO" id="GO:0016020">
    <property type="term" value="C:membrane"/>
    <property type="evidence" value="ECO:0000266"/>
    <property type="project" value="RGD"/>
</dbReference>
<dbReference type="GO" id="GO:0043005">
    <property type="term" value="C:neuron projection"/>
    <property type="evidence" value="ECO:0000250"/>
    <property type="project" value="UniProtKB"/>
</dbReference>
<dbReference type="GO" id="GO:0043025">
    <property type="term" value="C:neuronal cell body"/>
    <property type="evidence" value="ECO:0000250"/>
    <property type="project" value="UniProtKB"/>
</dbReference>
<dbReference type="GO" id="GO:0005634">
    <property type="term" value="C:nucleus"/>
    <property type="evidence" value="ECO:0007669"/>
    <property type="project" value="UniProtKB-SubCell"/>
</dbReference>
<dbReference type="GO" id="GO:0005886">
    <property type="term" value="C:plasma membrane"/>
    <property type="evidence" value="ECO:0007669"/>
    <property type="project" value="UniProtKB-SubCell"/>
</dbReference>
<dbReference type="GO" id="GO:0005524">
    <property type="term" value="F:ATP binding"/>
    <property type="evidence" value="ECO:0000250"/>
    <property type="project" value="UniProtKB"/>
</dbReference>
<dbReference type="GO" id="GO:0000287">
    <property type="term" value="F:magnesium ion binding"/>
    <property type="evidence" value="ECO:0000250"/>
    <property type="project" value="UniProtKB"/>
</dbReference>
<dbReference type="GO" id="GO:0008017">
    <property type="term" value="F:microtubule binding"/>
    <property type="evidence" value="ECO:0000250"/>
    <property type="project" value="UniProtKB"/>
</dbReference>
<dbReference type="GO" id="GO:0106310">
    <property type="term" value="F:protein serine kinase activity"/>
    <property type="evidence" value="ECO:0007669"/>
    <property type="project" value="RHEA"/>
</dbReference>
<dbReference type="GO" id="GO:0004674">
    <property type="term" value="F:protein serine/threonine kinase activity"/>
    <property type="evidence" value="ECO:0000250"/>
    <property type="project" value="UniProtKB"/>
</dbReference>
<dbReference type="GO" id="GO:0007420">
    <property type="term" value="P:brain development"/>
    <property type="evidence" value="ECO:0000266"/>
    <property type="project" value="RGD"/>
</dbReference>
<dbReference type="GO" id="GO:0007010">
    <property type="term" value="P:cytoskeleton organization"/>
    <property type="evidence" value="ECO:0000250"/>
    <property type="project" value="UniProtKB"/>
</dbReference>
<dbReference type="GO" id="GO:0035556">
    <property type="term" value="P:intracellular signal transduction"/>
    <property type="evidence" value="ECO:0000250"/>
    <property type="project" value="UniProtKB"/>
</dbReference>
<dbReference type="GO" id="GO:0006468">
    <property type="term" value="P:protein phosphorylation"/>
    <property type="evidence" value="ECO:0000250"/>
    <property type="project" value="UniProtKB"/>
</dbReference>
<dbReference type="CDD" id="cd23073">
    <property type="entry name" value="PDZ_MAST1"/>
    <property type="match status" value="1"/>
</dbReference>
<dbReference type="CDD" id="cd05609">
    <property type="entry name" value="STKc_MAST"/>
    <property type="match status" value="1"/>
</dbReference>
<dbReference type="FunFam" id="3.30.200.20:FF:001045">
    <property type="entry name" value="Microtubule-associated serine/threonine kinase 1a"/>
    <property type="match status" value="1"/>
</dbReference>
<dbReference type="FunFam" id="1.10.510.10:FF:000012">
    <property type="entry name" value="microtubule-associated serine/threonine-protein kinase 2 isoform X1"/>
    <property type="match status" value="1"/>
</dbReference>
<dbReference type="FunFam" id="1.20.1480.20:FF:000001">
    <property type="entry name" value="microtubule-associated serine/threonine-protein kinase 4 isoform X1"/>
    <property type="match status" value="1"/>
</dbReference>
<dbReference type="FunFam" id="2.30.42.10:FF:000008">
    <property type="entry name" value="microtubule-associated serine/threonine-protein kinase 4 isoform X2"/>
    <property type="match status" value="1"/>
</dbReference>
<dbReference type="Gene3D" id="2.30.42.10">
    <property type="match status" value="1"/>
</dbReference>
<dbReference type="Gene3D" id="1.20.1480.20">
    <property type="entry name" value="MAST3 pre-PK domain-like"/>
    <property type="match status" value="1"/>
</dbReference>
<dbReference type="Gene3D" id="3.30.200.20">
    <property type="entry name" value="Phosphorylase Kinase, domain 1"/>
    <property type="match status" value="1"/>
</dbReference>
<dbReference type="Gene3D" id="1.10.510.10">
    <property type="entry name" value="Transferase(Phosphotransferase) domain 1"/>
    <property type="match status" value="1"/>
</dbReference>
<dbReference type="InterPro" id="IPR000961">
    <property type="entry name" value="AGC-kinase_C"/>
</dbReference>
<dbReference type="InterPro" id="IPR011009">
    <property type="entry name" value="Kinase-like_dom_sf"/>
</dbReference>
<dbReference type="InterPro" id="IPR037711">
    <property type="entry name" value="MAST"/>
</dbReference>
<dbReference type="InterPro" id="IPR015022">
    <property type="entry name" value="MAST_pre-PK_dom"/>
</dbReference>
<dbReference type="InterPro" id="IPR023142">
    <property type="entry name" value="MAST_pre-PK_dom_sf"/>
</dbReference>
<dbReference type="InterPro" id="IPR001478">
    <property type="entry name" value="PDZ"/>
</dbReference>
<dbReference type="InterPro" id="IPR041489">
    <property type="entry name" value="PDZ_6"/>
</dbReference>
<dbReference type="InterPro" id="IPR036034">
    <property type="entry name" value="PDZ_sf"/>
</dbReference>
<dbReference type="InterPro" id="IPR000719">
    <property type="entry name" value="Prot_kinase_dom"/>
</dbReference>
<dbReference type="InterPro" id="IPR008271">
    <property type="entry name" value="Ser/Thr_kinase_AS"/>
</dbReference>
<dbReference type="InterPro" id="IPR050236">
    <property type="entry name" value="Ser_Thr_kinase_AGC"/>
</dbReference>
<dbReference type="PANTHER" id="PTHR24356:SF150">
    <property type="entry name" value="MICROTUBULE-ASSOCIATED SERINE_THREONINE-PROTEIN KINASE 1"/>
    <property type="match status" value="1"/>
</dbReference>
<dbReference type="PANTHER" id="PTHR24356">
    <property type="entry name" value="SERINE/THREONINE-PROTEIN KINASE"/>
    <property type="match status" value="1"/>
</dbReference>
<dbReference type="Pfam" id="PF08926">
    <property type="entry name" value="DUF1908"/>
    <property type="match status" value="1"/>
</dbReference>
<dbReference type="Pfam" id="PF17820">
    <property type="entry name" value="PDZ_6"/>
    <property type="match status" value="1"/>
</dbReference>
<dbReference type="Pfam" id="PF00069">
    <property type="entry name" value="Pkinase"/>
    <property type="match status" value="1"/>
</dbReference>
<dbReference type="SMART" id="SM00228">
    <property type="entry name" value="PDZ"/>
    <property type="match status" value="1"/>
</dbReference>
<dbReference type="SMART" id="SM00220">
    <property type="entry name" value="S_TKc"/>
    <property type="match status" value="1"/>
</dbReference>
<dbReference type="SUPFAM" id="SSF140482">
    <property type="entry name" value="MAST3 pre-PK domain-like"/>
    <property type="match status" value="1"/>
</dbReference>
<dbReference type="SUPFAM" id="SSF50156">
    <property type="entry name" value="PDZ domain-like"/>
    <property type="match status" value="1"/>
</dbReference>
<dbReference type="SUPFAM" id="SSF56112">
    <property type="entry name" value="Protein kinase-like (PK-like)"/>
    <property type="match status" value="1"/>
</dbReference>
<dbReference type="PROSITE" id="PS51285">
    <property type="entry name" value="AGC_KINASE_CTER"/>
    <property type="match status" value="1"/>
</dbReference>
<dbReference type="PROSITE" id="PS50106">
    <property type="entry name" value="PDZ"/>
    <property type="match status" value="1"/>
</dbReference>
<dbReference type="PROSITE" id="PS50011">
    <property type="entry name" value="PROTEIN_KINASE_DOM"/>
    <property type="match status" value="1"/>
</dbReference>
<dbReference type="PROSITE" id="PS00108">
    <property type="entry name" value="PROTEIN_KINASE_ST"/>
    <property type="match status" value="1"/>
</dbReference>
<protein>
    <recommendedName>
        <fullName>Microtubule-associated serine/threonine-protein kinase 1</fullName>
        <ecNumber>2.7.11.1</ecNumber>
    </recommendedName>
    <alternativeName>
        <fullName>Syntrophin-associated serine/threonine-protein kinase</fullName>
    </alternativeName>
</protein>
<keyword id="KW-0025">Alternative splicing</keyword>
<keyword id="KW-0067">ATP-binding</keyword>
<keyword id="KW-1003">Cell membrane</keyword>
<keyword id="KW-0966">Cell projection</keyword>
<keyword id="KW-0963">Cytoplasm</keyword>
<keyword id="KW-0206">Cytoskeleton</keyword>
<keyword id="KW-0418">Kinase</keyword>
<keyword id="KW-0460">Magnesium</keyword>
<keyword id="KW-0472">Membrane</keyword>
<keyword id="KW-0479">Metal-binding</keyword>
<keyword id="KW-0547">Nucleotide-binding</keyword>
<keyword id="KW-0539">Nucleus</keyword>
<keyword id="KW-0597">Phosphoprotein</keyword>
<keyword id="KW-1185">Reference proteome</keyword>
<keyword id="KW-0723">Serine/threonine-protein kinase</keyword>
<keyword id="KW-0808">Transferase</keyword>
<sequence length="1570" mass="171028">MSDSLWTALSNFSMPSFPGGSMFRRTKSCRTSNRKSLILTSTSPTLPRPHSPLPGHLGSSPLDSPRNFSPNTPAHFSFASSRRADGRRWSLASLPSSGYGTNTPSSTVSSSCSSQERLHQLPYQPTVDELHFLSKHFGSTESITDEDGGRRSPAVRPRSRSLSPGRSPSSYDNEIVMMNHVYKERFPKATAQMEEKLRDFARAYEPDSVLPLADGVLSFIHHQIIELARDCLTKSRDGLITTVYFYELQENLEKLLQDAYERSESLEVAFVTQLVKKLLIIISRPARLLECLEFNPEEFYHLLEAAEGHAKEGHLVKTDIPRYIIRQLGLTRDPFPDVVRLEEQDSGGSNTPEQDDTSEGRSSTSKAKKPPGESDFDTIKLISNGAYGAVYLVRHRDTRQRFAMKKINKQNLILRNQIQQAFVERDILTFAENPFVVGMFCSFETRRHLCMVMEYVEGGDCATLLKNIGALPVEMARMYFAETVLALEYLHNYGIVHRDLKPDNLLITSMGHIKLTDFGLSKMGLMSLTTNLYEGHIEKDAREFLDKQVCGTPEYIAPEVILRQGYGKPVDWWAMGIILYEFLVGCVPFFGDTPEELFGQVISDDILWPEGDEALPTDAQLLISSLLQTNPLVRLGAGGAFEVKQHSFFRDLDWTGLLRQKAEFIPHLESEDDTSYFDTRSDRYHHVNSYDEDDTTEEEPVEIRQFSSCSPRFSKVYSSMEQLSQHEPKTPVSASGASKRDPNAKGPEEKVAGKREGLGGLTLREKTWRGGSPEIKRFSASEASFLEGEASPPLGARRRFSALLEPSRFTAPQEDEDEARLRRPPRPSSDPPSSLDTRVPKEAAQGEGTSTPGEPEATERSHPGDFCPPSKDGDPSGPRATNDLVLRRARHQQLSGDLSVEKRPSRTGGKVIKSASATALSVMIPAVDPHGGSPLASPMSPRSLSSNPSSRDSSPSRDYSPAVSGLRSPITIQRSGKKYGFTLRAIRVYMGDSDVYSVHHIVWHVEEGGPAQEAGLCAGDLITHVNGEPVHGMVHPEVVELILKSGNKVAVTTTPFENTSIRIGPARRSSYKAKMARRNKRPSAKDGQESKKRSSLFRKITKQSNLLHTSRSLSSLNRSLSSSDSLPGSPTHGLPARSPTHSYRSTPDSAYLGASSQSSSPASSTPNSPASSASHHIRPSTLHGLSPKLHRQYRSARCKSAGNIPLSPLAHTPSPTQASPPPLPGHTVGSSHTTQSFPAKLHSSPPIVRPRPKSAEPPRSPLLKRVQSAEKLGASLGADKKGALRKHSLEVGHPDFRKDFHGELALHSLAESDGETPPIEGPGATRQVAMRRLGRQESPLSLGADPLLPDGVQRPMASGKEDSAGGTEACTPPRATTPGSRTLERDLGCTRHQSVQTEDGPGGVARALAKAALSPVQEHETGRRSSSGEAGTPPVPIVVEPARPGVKTQTPQPLGTDSKGLKEPVAQIPLVPDAPRVRERWVLEEVEERTTLSGPRSKPASPKLSPDPQTPTVAPTKNVPRSAAPPVPPASLMVPGTKPEAGSNSRCPAEGVASAGLTKTGAPSPASLGP</sequence>
<gene>
    <name evidence="12" type="primary">Mast1</name>
    <name evidence="9" type="synonym">Sast</name>
</gene>